<keyword id="KW-0002">3D-structure</keyword>
<keyword id="KW-1185">Reference proteome</keyword>
<keyword id="KW-0687">Ribonucleoprotein</keyword>
<keyword id="KW-0689">Ribosomal protein</keyword>
<keyword id="KW-0694">RNA-binding</keyword>
<keyword id="KW-0699">rRNA-binding</keyword>
<accession>Q2G2Q1</accession>
<protein>
    <recommendedName>
        <fullName evidence="1">Small ribosomal subunit protein uS15</fullName>
    </recommendedName>
    <alternativeName>
        <fullName evidence="2">30S ribosomal protein S15</fullName>
    </alternativeName>
</protein>
<organism>
    <name type="scientific">Staphylococcus aureus (strain NCTC 8325 / PS 47)</name>
    <dbReference type="NCBI Taxonomy" id="93061"/>
    <lineage>
        <taxon>Bacteria</taxon>
        <taxon>Bacillati</taxon>
        <taxon>Bacillota</taxon>
        <taxon>Bacilli</taxon>
        <taxon>Bacillales</taxon>
        <taxon>Staphylococcaceae</taxon>
        <taxon>Staphylococcus</taxon>
    </lineage>
</organism>
<comment type="function">
    <text evidence="1">One of the primary rRNA binding proteins, it binds directly to 16S rRNA where it helps nucleate assembly of the platform of the 30S subunit by binding and bridging several RNA helices of the 16S rRNA.</text>
</comment>
<comment type="function">
    <text evidence="1">Forms an intersubunit bridge (bridge B4) with the 23S rRNA of the 50S subunit in the ribosome.</text>
</comment>
<comment type="subunit">
    <text evidence="1">Part of the 30S ribosomal subunit. Forms a bridge to the 50S subunit in the 70S ribosome, contacting the 23S rRNA.</text>
</comment>
<comment type="similarity">
    <text evidence="1">Belongs to the universal ribosomal protein uS15 family.</text>
</comment>
<proteinExistence type="evidence at protein level"/>
<feature type="chain" id="PRO_0000255534" description="Small ribosomal subunit protein uS15">
    <location>
        <begin position="1"/>
        <end position="89"/>
    </location>
</feature>
<feature type="helix" evidence="4">
    <location>
        <begin position="5"/>
        <end position="14"/>
    </location>
</feature>
<feature type="strand" evidence="3">
    <location>
        <begin position="17"/>
        <end position="20"/>
    </location>
</feature>
<feature type="helix" evidence="4">
    <location>
        <begin position="25"/>
        <end position="45"/>
    </location>
</feature>
<feature type="helix" evidence="4">
    <location>
        <begin position="50"/>
        <end position="73"/>
    </location>
</feature>
<feature type="helix" evidence="4">
    <location>
        <begin position="75"/>
        <end position="84"/>
    </location>
</feature>
<reference key="1">
    <citation type="book" date="2006" name="Gram positive pathogens, 2nd edition">
        <title>The Staphylococcus aureus NCTC 8325 genome.</title>
        <editorList>
            <person name="Fischetti V."/>
            <person name="Novick R."/>
            <person name="Ferretti J."/>
            <person name="Portnoy D."/>
            <person name="Rood J."/>
        </editorList>
        <authorList>
            <person name="Gillaspy A.F."/>
            <person name="Worrell V."/>
            <person name="Orvis J."/>
            <person name="Roe B.A."/>
            <person name="Dyer D.W."/>
            <person name="Iandolo J.J."/>
        </authorList>
    </citation>
    <scope>NUCLEOTIDE SEQUENCE [LARGE SCALE GENOMIC DNA]</scope>
    <source>
        <strain>NCTC 8325 / PS 47</strain>
    </source>
</reference>
<evidence type="ECO:0000255" key="1">
    <source>
        <dbReference type="HAMAP-Rule" id="MF_01343"/>
    </source>
</evidence>
<evidence type="ECO:0000305" key="2"/>
<evidence type="ECO:0007829" key="3">
    <source>
        <dbReference type="PDB" id="7BGD"/>
    </source>
</evidence>
<evidence type="ECO:0007829" key="4">
    <source>
        <dbReference type="PDB" id="8BYV"/>
    </source>
</evidence>
<gene>
    <name evidence="1" type="primary">rpsO</name>
    <name type="ordered locus">SAOUHSC_01250</name>
</gene>
<sequence length="89" mass="10608">MAISQERKNEIIKEYRVHETDTGSPEVQIAVLTAEINAVNEHLRTHKKDHHSRRGLLKMVGRRRHLLNYLRSKDIQRYRELIKSLGIRR</sequence>
<dbReference type="EMBL" id="CP000253">
    <property type="protein sequence ID" value="ABD30351.1"/>
    <property type="molecule type" value="Genomic_DNA"/>
</dbReference>
<dbReference type="RefSeq" id="WP_001018328.1">
    <property type="nucleotide sequence ID" value="NZ_LS483365.1"/>
</dbReference>
<dbReference type="RefSeq" id="YP_499783.1">
    <property type="nucleotide sequence ID" value="NC_007795.1"/>
</dbReference>
<dbReference type="PDB" id="5LI0">
    <property type="method" value="EM"/>
    <property type="resolution" value="3.80 A"/>
    <property type="chains" value="o=2-89"/>
</dbReference>
<dbReference type="PDB" id="5ND8">
    <property type="method" value="EM"/>
    <property type="resolution" value="3.70 A"/>
    <property type="chains" value="o=1-89"/>
</dbReference>
<dbReference type="PDB" id="5ND9">
    <property type="method" value="EM"/>
    <property type="resolution" value="3.70 A"/>
    <property type="chains" value="o=1-89"/>
</dbReference>
<dbReference type="PDB" id="5TCU">
    <property type="method" value="EM"/>
    <property type="resolution" value="3.90 A"/>
    <property type="chains" value="S6=2-89"/>
</dbReference>
<dbReference type="PDB" id="6YEF">
    <property type="method" value="EM"/>
    <property type="resolution" value="3.20 A"/>
    <property type="chains" value="o=1-89"/>
</dbReference>
<dbReference type="PDB" id="7BGD">
    <property type="method" value="EM"/>
    <property type="resolution" value="3.20 A"/>
    <property type="chains" value="o=1-89"/>
</dbReference>
<dbReference type="PDB" id="7KWG">
    <property type="method" value="EM"/>
    <property type="resolution" value="3.75 A"/>
    <property type="chains" value="o=1-89"/>
</dbReference>
<dbReference type="PDB" id="7NHL">
    <property type="method" value="EM"/>
    <property type="resolution" value="3.10 A"/>
    <property type="chains" value="p=1-89"/>
</dbReference>
<dbReference type="PDB" id="7NHM">
    <property type="method" value="EM"/>
    <property type="resolution" value="3.10 A"/>
    <property type="chains" value="p=1-89"/>
</dbReference>
<dbReference type="PDB" id="8BH6">
    <property type="method" value="EM"/>
    <property type="resolution" value="3.70 A"/>
    <property type="chains" value="o=1-89"/>
</dbReference>
<dbReference type="PDB" id="8BH7">
    <property type="method" value="EM"/>
    <property type="resolution" value="4.23 A"/>
    <property type="chains" value="o=1-89"/>
</dbReference>
<dbReference type="PDB" id="8BYV">
    <property type="method" value="EM"/>
    <property type="resolution" value="2.89 A"/>
    <property type="chains" value="o=1-89"/>
</dbReference>
<dbReference type="PDB" id="8P2F">
    <property type="method" value="EM"/>
    <property type="resolution" value="2.44 A"/>
    <property type="chains" value="p=1-89"/>
</dbReference>
<dbReference type="PDB" id="8P2G">
    <property type="method" value="EM"/>
    <property type="resolution" value="2.02 A"/>
    <property type="chains" value="p=1-89"/>
</dbReference>
<dbReference type="PDB" id="8P2H">
    <property type="method" value="EM"/>
    <property type="resolution" value="2.49 A"/>
    <property type="chains" value="p=1-89"/>
</dbReference>
<dbReference type="PDBsum" id="5LI0"/>
<dbReference type="PDBsum" id="5ND8"/>
<dbReference type="PDBsum" id="5ND9"/>
<dbReference type="PDBsum" id="5TCU"/>
<dbReference type="PDBsum" id="6YEF"/>
<dbReference type="PDBsum" id="7BGD"/>
<dbReference type="PDBsum" id="7KWG"/>
<dbReference type="PDBsum" id="7NHL"/>
<dbReference type="PDBsum" id="7NHM"/>
<dbReference type="PDBsum" id="8BH6"/>
<dbReference type="PDBsum" id="8BH7"/>
<dbReference type="PDBsum" id="8BYV"/>
<dbReference type="PDBsum" id="8P2F"/>
<dbReference type="PDBsum" id="8P2G"/>
<dbReference type="PDBsum" id="8P2H"/>
<dbReference type="EMDB" id="EMD-10791"/>
<dbReference type="EMDB" id="EMD-12178"/>
<dbReference type="EMDB" id="EMD-12332"/>
<dbReference type="EMDB" id="EMD-12333"/>
<dbReference type="EMDB" id="EMD-16048"/>
<dbReference type="EMDB" id="EMD-16049"/>
<dbReference type="EMDB" id="EMD-16334"/>
<dbReference type="EMDB" id="EMD-17363"/>
<dbReference type="EMDB" id="EMD-17364"/>
<dbReference type="EMDB" id="EMD-17365"/>
<dbReference type="EMDB" id="EMD-23052"/>
<dbReference type="EMDB" id="EMD-3624"/>
<dbReference type="EMDB" id="EMD-3625"/>
<dbReference type="EMDB" id="EMD-4050"/>
<dbReference type="EMDB" id="EMD-8402"/>
<dbReference type="SMR" id="Q2G2Q1"/>
<dbReference type="IntAct" id="Q2G2Q1">
    <property type="interactions" value="1"/>
</dbReference>
<dbReference type="STRING" id="93061.SAOUHSC_01250"/>
<dbReference type="PaxDb" id="1280-SAXN108_1277"/>
<dbReference type="GeneID" id="3919981"/>
<dbReference type="KEGG" id="sao:SAOUHSC_01250"/>
<dbReference type="PATRIC" id="fig|93061.5.peg.1144"/>
<dbReference type="eggNOG" id="COG0184">
    <property type="taxonomic scope" value="Bacteria"/>
</dbReference>
<dbReference type="HOGENOM" id="CLU_148518_0_0_9"/>
<dbReference type="OrthoDB" id="9799262at2"/>
<dbReference type="PRO" id="PR:Q2G2Q1"/>
<dbReference type="Proteomes" id="UP000008816">
    <property type="component" value="Chromosome"/>
</dbReference>
<dbReference type="GO" id="GO:0022627">
    <property type="term" value="C:cytosolic small ribosomal subunit"/>
    <property type="evidence" value="ECO:0000318"/>
    <property type="project" value="GO_Central"/>
</dbReference>
<dbReference type="GO" id="GO:0019843">
    <property type="term" value="F:rRNA binding"/>
    <property type="evidence" value="ECO:0007669"/>
    <property type="project" value="UniProtKB-UniRule"/>
</dbReference>
<dbReference type="GO" id="GO:0003735">
    <property type="term" value="F:structural constituent of ribosome"/>
    <property type="evidence" value="ECO:0007669"/>
    <property type="project" value="InterPro"/>
</dbReference>
<dbReference type="GO" id="GO:0006412">
    <property type="term" value="P:translation"/>
    <property type="evidence" value="ECO:0007669"/>
    <property type="project" value="UniProtKB-UniRule"/>
</dbReference>
<dbReference type="CDD" id="cd00353">
    <property type="entry name" value="Ribosomal_S15p_S13e"/>
    <property type="match status" value="1"/>
</dbReference>
<dbReference type="FunFam" id="1.10.287.10:FF:000002">
    <property type="entry name" value="30S ribosomal protein S15"/>
    <property type="match status" value="1"/>
</dbReference>
<dbReference type="Gene3D" id="6.10.250.3130">
    <property type="match status" value="1"/>
</dbReference>
<dbReference type="Gene3D" id="1.10.287.10">
    <property type="entry name" value="S15/NS1, RNA-binding"/>
    <property type="match status" value="1"/>
</dbReference>
<dbReference type="HAMAP" id="MF_01343_B">
    <property type="entry name" value="Ribosomal_uS15_B"/>
    <property type="match status" value="1"/>
</dbReference>
<dbReference type="InterPro" id="IPR000589">
    <property type="entry name" value="Ribosomal_uS15"/>
</dbReference>
<dbReference type="InterPro" id="IPR005290">
    <property type="entry name" value="Ribosomal_uS15_bac-type"/>
</dbReference>
<dbReference type="InterPro" id="IPR009068">
    <property type="entry name" value="uS15_NS1_RNA-bd_sf"/>
</dbReference>
<dbReference type="NCBIfam" id="TIGR00952">
    <property type="entry name" value="S15_bact"/>
    <property type="match status" value="1"/>
</dbReference>
<dbReference type="PANTHER" id="PTHR23321">
    <property type="entry name" value="RIBOSOMAL PROTEIN S15, BACTERIAL AND ORGANELLAR"/>
    <property type="match status" value="1"/>
</dbReference>
<dbReference type="PANTHER" id="PTHR23321:SF26">
    <property type="entry name" value="SMALL RIBOSOMAL SUBUNIT PROTEIN US15M"/>
    <property type="match status" value="1"/>
</dbReference>
<dbReference type="Pfam" id="PF00312">
    <property type="entry name" value="Ribosomal_S15"/>
    <property type="match status" value="1"/>
</dbReference>
<dbReference type="SMART" id="SM01387">
    <property type="entry name" value="Ribosomal_S15"/>
    <property type="match status" value="1"/>
</dbReference>
<dbReference type="SUPFAM" id="SSF47060">
    <property type="entry name" value="S15/NS1 RNA-binding domain"/>
    <property type="match status" value="1"/>
</dbReference>
<dbReference type="PROSITE" id="PS00362">
    <property type="entry name" value="RIBOSOMAL_S15"/>
    <property type="match status" value="1"/>
</dbReference>
<name>RS15_STAA8</name>